<protein>
    <recommendedName>
        <fullName>Putative adhesin RP828</fullName>
    </recommendedName>
</protein>
<name>Y828_RICPR</name>
<gene>
    <name type="ordered locus">RP828</name>
</gene>
<keyword id="KW-1185">Reference proteome</keyword>
<keyword id="KW-0732">Signal</keyword>
<sequence length="222" mass="23743">MKKLLLIATASATILSSSVSFAECIDNEWYLRADAGVAMFNKEQDKATGVKLKSNKAIPIDLGIGYYISENVRADLTLGTTIGGKLKKYGAATNTHFTGTNVSVSHKPTVTRLLINGYVDLTSFDMFDVFVGGGVGPALVKEKISGVSGLASNTKNKTNVSYKLIFGTSAQIADGVKVELAYSWINDGKTKTHNVMYKGASVQTGGMRYQSHNLTVGVRFGI</sequence>
<dbReference type="EMBL" id="AJ235273">
    <property type="protein sequence ID" value="CAA15253.1"/>
    <property type="molecule type" value="Genomic_DNA"/>
</dbReference>
<dbReference type="PIR" id="E71644">
    <property type="entry name" value="E71644"/>
</dbReference>
<dbReference type="RefSeq" id="NP_221177.1">
    <property type="nucleotide sequence ID" value="NC_000963.1"/>
</dbReference>
<dbReference type="RefSeq" id="WP_004596835.1">
    <property type="nucleotide sequence ID" value="NC_000963.1"/>
</dbReference>
<dbReference type="STRING" id="272947.gene:17555897"/>
<dbReference type="EnsemblBacteria" id="CAA15253">
    <property type="protein sequence ID" value="CAA15253"/>
    <property type="gene ID" value="CAA15253"/>
</dbReference>
<dbReference type="KEGG" id="rpr:RP828"/>
<dbReference type="PATRIC" id="fig|272947.5.peg.865"/>
<dbReference type="eggNOG" id="COG3637">
    <property type="taxonomic scope" value="Bacteria"/>
</dbReference>
<dbReference type="HOGENOM" id="CLU_1146500_0_0_5"/>
<dbReference type="OrthoDB" id="5643626at2"/>
<dbReference type="Proteomes" id="UP000002480">
    <property type="component" value="Chromosome"/>
</dbReference>
<dbReference type="GO" id="GO:0009279">
    <property type="term" value="C:cell outer membrane"/>
    <property type="evidence" value="ECO:0007669"/>
    <property type="project" value="InterPro"/>
</dbReference>
<dbReference type="Gene3D" id="2.40.160.20">
    <property type="match status" value="1"/>
</dbReference>
<dbReference type="InterPro" id="IPR011250">
    <property type="entry name" value="OMP/PagP_b-brl"/>
</dbReference>
<dbReference type="InterPro" id="IPR000498">
    <property type="entry name" value="OmpA-like_TM_dom"/>
</dbReference>
<dbReference type="Pfam" id="PF01389">
    <property type="entry name" value="OmpA_membrane"/>
    <property type="match status" value="1"/>
</dbReference>
<dbReference type="SUPFAM" id="SSF56925">
    <property type="entry name" value="OMPA-like"/>
    <property type="match status" value="1"/>
</dbReference>
<evidence type="ECO:0000255" key="1"/>
<proteinExistence type="evidence at protein level"/>
<organism>
    <name type="scientific">Rickettsia prowazekii (strain Madrid E)</name>
    <dbReference type="NCBI Taxonomy" id="272947"/>
    <lineage>
        <taxon>Bacteria</taxon>
        <taxon>Pseudomonadati</taxon>
        <taxon>Pseudomonadota</taxon>
        <taxon>Alphaproteobacteria</taxon>
        <taxon>Rickettsiales</taxon>
        <taxon>Rickettsiaceae</taxon>
        <taxon>Rickettsieae</taxon>
        <taxon>Rickettsia</taxon>
        <taxon>typhus group</taxon>
    </lineage>
</organism>
<accession>Q9ZCC9</accession>
<comment type="function">
    <text>Adheres to biotinylated epithelial (Vero cell) proteins.</text>
</comment>
<reference key="1">
    <citation type="journal article" date="1998" name="Nature">
        <title>The genome sequence of Rickettsia prowazekii and the origin of mitochondria.</title>
        <authorList>
            <person name="Andersson S.G.E."/>
            <person name="Zomorodipour A."/>
            <person name="Andersson J.O."/>
            <person name="Sicheritz-Ponten T."/>
            <person name="Alsmark U.C.M."/>
            <person name="Podowski R.M."/>
            <person name="Naeslund A.K."/>
            <person name="Eriksson A.-S."/>
            <person name="Winkler H.H."/>
            <person name="Kurland C.G."/>
        </authorList>
    </citation>
    <scope>NUCLEOTIDE SEQUENCE [LARGE SCALE GENOMIC DNA]</scope>
    <source>
        <strain>Madrid E</strain>
    </source>
</reference>
<reference key="2">
    <citation type="journal article" date="2006" name="Res. Microbiol.">
        <title>Identification of two putative rickettsial adhesins by proteomic analysis.</title>
        <authorList>
            <person name="Renesto P."/>
            <person name="Samson L."/>
            <person name="Ogata H."/>
            <person name="Azza S."/>
            <person name="Fourquet P."/>
            <person name="Gorvel J.-P."/>
            <person name="Heinzen R.A."/>
            <person name="Raoult D."/>
        </authorList>
    </citation>
    <scope>IDENTIFICATION BY MASS SPECTROMETRY</scope>
    <scope>ADHESION TO BIOTINYLATED EUKARYOTIC CELLS</scope>
    <source>
        <strain>ATCC VR-142 / Breinl</strain>
    </source>
</reference>
<feature type="signal peptide" evidence="1">
    <location>
        <begin position="1"/>
        <end position="22"/>
    </location>
</feature>
<feature type="chain" id="PRO_0000317018" description="Putative adhesin RP828">
    <location>
        <begin position="23"/>
        <end position="222"/>
    </location>
</feature>